<accession>Q12ZU8</accession>
<gene>
    <name evidence="1" type="primary">rpl2</name>
    <name type="ordered locus">Mbur_0004</name>
</gene>
<organism>
    <name type="scientific">Methanococcoides burtonii (strain DSM 6242 / NBRC 107633 / OCM 468 / ACE-M)</name>
    <dbReference type="NCBI Taxonomy" id="259564"/>
    <lineage>
        <taxon>Archaea</taxon>
        <taxon>Methanobacteriati</taxon>
        <taxon>Methanobacteriota</taxon>
        <taxon>Stenosarchaea group</taxon>
        <taxon>Methanomicrobia</taxon>
        <taxon>Methanosarcinales</taxon>
        <taxon>Methanosarcinaceae</taxon>
        <taxon>Methanococcoides</taxon>
    </lineage>
</organism>
<feature type="chain" id="PRO_0000310047" description="Large ribosomal subunit protein uL2">
    <location>
        <begin position="1"/>
        <end position="237"/>
    </location>
</feature>
<feature type="region of interest" description="Disordered" evidence="2">
    <location>
        <begin position="202"/>
        <end position="237"/>
    </location>
</feature>
<feature type="compositionally biased region" description="Basic residues" evidence="2">
    <location>
        <begin position="225"/>
        <end position="237"/>
    </location>
</feature>
<sequence>MAKRIISQNRGRGSPTYRAPSHKYKAELKHPRVDEESTLNGTVIGIEHDPARSAPIAMVAFENGKKQFIVVPEGISVGEKLSCGVSAEVKPGNTLPLAEIPEGIPICNIESKPNDGGQYARSSGVYATLVSRELSKVVVRMPSGVLKWFHPKCRATIGIVAGGGRVDRPFLKAGKKYHKMKARAAKYPRVSGIAMNVVDHPFGGGNRKHPGKPTTVSRNAPPGRKVGHIAARRTGKR</sequence>
<keyword id="KW-0687">Ribonucleoprotein</keyword>
<keyword id="KW-0689">Ribosomal protein</keyword>
<keyword id="KW-0694">RNA-binding</keyword>
<keyword id="KW-0699">rRNA-binding</keyword>
<reference key="1">
    <citation type="journal article" date="2009" name="ISME J.">
        <title>The genome sequence of the psychrophilic archaeon, Methanococcoides burtonii: the role of genome evolution in cold adaptation.</title>
        <authorList>
            <person name="Allen M.A."/>
            <person name="Lauro F.M."/>
            <person name="Williams T.J."/>
            <person name="Burg D."/>
            <person name="Siddiqui K.S."/>
            <person name="De Francisci D."/>
            <person name="Chong K.W."/>
            <person name="Pilak O."/>
            <person name="Chew H.H."/>
            <person name="De Maere M.Z."/>
            <person name="Ting L."/>
            <person name="Katrib M."/>
            <person name="Ng C."/>
            <person name="Sowers K.R."/>
            <person name="Galperin M.Y."/>
            <person name="Anderson I.J."/>
            <person name="Ivanova N."/>
            <person name="Dalin E."/>
            <person name="Martinez M."/>
            <person name="Lapidus A."/>
            <person name="Hauser L."/>
            <person name="Land M."/>
            <person name="Thomas T."/>
            <person name="Cavicchioli R."/>
        </authorList>
    </citation>
    <scope>NUCLEOTIDE SEQUENCE [LARGE SCALE GENOMIC DNA]</scope>
    <source>
        <strain>DSM 6242 / NBRC 107633 / OCM 468 / ACE-M</strain>
    </source>
</reference>
<evidence type="ECO:0000255" key="1">
    <source>
        <dbReference type="HAMAP-Rule" id="MF_01320"/>
    </source>
</evidence>
<evidence type="ECO:0000256" key="2">
    <source>
        <dbReference type="SAM" id="MobiDB-lite"/>
    </source>
</evidence>
<evidence type="ECO:0000305" key="3"/>
<name>RL2_METBU</name>
<comment type="function">
    <text evidence="1">One of the primary rRNA binding proteins. Required for association of the 30S and 50S subunits to form the 70S ribosome, for tRNA binding and peptide bond formation. It has been suggested to have peptidyltransferase activity; this is somewhat controversial. Makes several contacts with the 16S rRNA in the 70S ribosome.</text>
</comment>
<comment type="subunit">
    <text evidence="1">Part of the 50S ribosomal subunit. Forms a bridge to the 30S subunit in the 70S ribosome.</text>
</comment>
<comment type="similarity">
    <text evidence="1">Belongs to the universal ribosomal protein uL2 family.</text>
</comment>
<protein>
    <recommendedName>
        <fullName evidence="1">Large ribosomal subunit protein uL2</fullName>
    </recommendedName>
    <alternativeName>
        <fullName evidence="3">50S ribosomal protein L2</fullName>
    </alternativeName>
</protein>
<dbReference type="EMBL" id="CP000300">
    <property type="protein sequence ID" value="ABE51028.1"/>
    <property type="molecule type" value="Genomic_DNA"/>
</dbReference>
<dbReference type="RefSeq" id="WP_011498192.1">
    <property type="nucleotide sequence ID" value="NC_007955.1"/>
</dbReference>
<dbReference type="SMR" id="Q12ZU8"/>
<dbReference type="STRING" id="259564.Mbur_0004"/>
<dbReference type="GeneID" id="3996834"/>
<dbReference type="KEGG" id="mbu:Mbur_0004"/>
<dbReference type="HOGENOM" id="CLU_036235_0_3_2"/>
<dbReference type="OrthoDB" id="5987at2157"/>
<dbReference type="Proteomes" id="UP000001979">
    <property type="component" value="Chromosome"/>
</dbReference>
<dbReference type="GO" id="GO:0022625">
    <property type="term" value="C:cytosolic large ribosomal subunit"/>
    <property type="evidence" value="ECO:0007669"/>
    <property type="project" value="TreeGrafter"/>
</dbReference>
<dbReference type="GO" id="GO:0019843">
    <property type="term" value="F:rRNA binding"/>
    <property type="evidence" value="ECO:0007669"/>
    <property type="project" value="UniProtKB-UniRule"/>
</dbReference>
<dbReference type="GO" id="GO:0003735">
    <property type="term" value="F:structural constituent of ribosome"/>
    <property type="evidence" value="ECO:0007669"/>
    <property type="project" value="InterPro"/>
</dbReference>
<dbReference type="GO" id="GO:0002181">
    <property type="term" value="P:cytoplasmic translation"/>
    <property type="evidence" value="ECO:0007669"/>
    <property type="project" value="TreeGrafter"/>
</dbReference>
<dbReference type="FunFam" id="2.30.30.30:FF:000001">
    <property type="entry name" value="50S ribosomal protein L2"/>
    <property type="match status" value="1"/>
</dbReference>
<dbReference type="FunFam" id="4.10.950.10:FF:000002">
    <property type="entry name" value="60S ribosomal protein L2"/>
    <property type="match status" value="1"/>
</dbReference>
<dbReference type="Gene3D" id="2.30.30.30">
    <property type="match status" value="1"/>
</dbReference>
<dbReference type="Gene3D" id="2.40.50.140">
    <property type="entry name" value="Nucleic acid-binding proteins"/>
    <property type="match status" value="1"/>
</dbReference>
<dbReference type="Gene3D" id="4.10.950.10">
    <property type="entry name" value="Ribosomal protein L2, domain 3"/>
    <property type="match status" value="1"/>
</dbReference>
<dbReference type="HAMAP" id="MF_01320_A">
    <property type="entry name" value="Ribosomal_uL2_A"/>
    <property type="match status" value="1"/>
</dbReference>
<dbReference type="InterPro" id="IPR012340">
    <property type="entry name" value="NA-bd_OB-fold"/>
</dbReference>
<dbReference type="InterPro" id="IPR014722">
    <property type="entry name" value="Rib_uL2_dom2"/>
</dbReference>
<dbReference type="InterPro" id="IPR002171">
    <property type="entry name" value="Ribosomal_uL2"/>
</dbReference>
<dbReference type="InterPro" id="IPR023672">
    <property type="entry name" value="Ribosomal_uL2_arc_euk"/>
</dbReference>
<dbReference type="InterPro" id="IPR022669">
    <property type="entry name" value="Ribosomal_uL2_C"/>
</dbReference>
<dbReference type="InterPro" id="IPR014726">
    <property type="entry name" value="Ribosomal_uL2_dom3"/>
</dbReference>
<dbReference type="InterPro" id="IPR022666">
    <property type="entry name" value="Ribosomal_uL2_RNA-bd_dom"/>
</dbReference>
<dbReference type="InterPro" id="IPR008991">
    <property type="entry name" value="Translation_prot_SH3-like_sf"/>
</dbReference>
<dbReference type="NCBIfam" id="NF007180">
    <property type="entry name" value="PRK09612.1"/>
    <property type="match status" value="1"/>
</dbReference>
<dbReference type="PANTHER" id="PTHR13691:SF16">
    <property type="entry name" value="LARGE RIBOSOMAL SUBUNIT PROTEIN UL2"/>
    <property type="match status" value="1"/>
</dbReference>
<dbReference type="PANTHER" id="PTHR13691">
    <property type="entry name" value="RIBOSOMAL PROTEIN L2"/>
    <property type="match status" value="1"/>
</dbReference>
<dbReference type="Pfam" id="PF00181">
    <property type="entry name" value="Ribosomal_L2"/>
    <property type="match status" value="1"/>
</dbReference>
<dbReference type="Pfam" id="PF03947">
    <property type="entry name" value="Ribosomal_L2_C"/>
    <property type="match status" value="1"/>
</dbReference>
<dbReference type="PIRSF" id="PIRSF002158">
    <property type="entry name" value="Ribosomal_L2"/>
    <property type="match status" value="1"/>
</dbReference>
<dbReference type="SMART" id="SM01383">
    <property type="entry name" value="Ribosomal_L2"/>
    <property type="match status" value="1"/>
</dbReference>
<dbReference type="SMART" id="SM01382">
    <property type="entry name" value="Ribosomal_L2_C"/>
    <property type="match status" value="1"/>
</dbReference>
<dbReference type="SUPFAM" id="SSF50249">
    <property type="entry name" value="Nucleic acid-binding proteins"/>
    <property type="match status" value="1"/>
</dbReference>
<dbReference type="SUPFAM" id="SSF50104">
    <property type="entry name" value="Translation proteins SH3-like domain"/>
    <property type="match status" value="1"/>
</dbReference>
<proteinExistence type="inferred from homology"/>